<organism>
    <name type="scientific">Streptococcus pyogenes serotype M3 (strain SSI-1)</name>
    <dbReference type="NCBI Taxonomy" id="193567"/>
    <lineage>
        <taxon>Bacteria</taxon>
        <taxon>Bacillati</taxon>
        <taxon>Bacillota</taxon>
        <taxon>Bacilli</taxon>
        <taxon>Lactobacillales</taxon>
        <taxon>Streptococcaceae</taxon>
        <taxon>Streptococcus</taxon>
    </lineage>
</organism>
<accession>P0DC49</accession>
<accession>Q8K7K5</accession>
<gene>
    <name evidence="1" type="primary">murB</name>
    <name type="ordered locus">SPs0963</name>
</gene>
<protein>
    <recommendedName>
        <fullName evidence="1">UDP-N-acetylenolpyruvoylglucosamine reductase</fullName>
        <ecNumber evidence="1">1.3.1.98</ecNumber>
    </recommendedName>
    <alternativeName>
        <fullName evidence="1">UDP-N-acetylmuramate dehydrogenase</fullName>
    </alternativeName>
</protein>
<dbReference type="EC" id="1.3.1.98" evidence="1"/>
<dbReference type="EMBL" id="BA000034">
    <property type="protein sequence ID" value="BAC64058.1"/>
    <property type="molecule type" value="Genomic_DNA"/>
</dbReference>
<dbReference type="RefSeq" id="WP_011054471.1">
    <property type="nucleotide sequence ID" value="NC_004606.1"/>
</dbReference>
<dbReference type="SMR" id="P0DC49"/>
<dbReference type="KEGG" id="sps:SPs0963"/>
<dbReference type="HOGENOM" id="CLU_035304_1_1_9"/>
<dbReference type="UniPathway" id="UPA00219"/>
<dbReference type="GO" id="GO:0005829">
    <property type="term" value="C:cytosol"/>
    <property type="evidence" value="ECO:0007669"/>
    <property type="project" value="TreeGrafter"/>
</dbReference>
<dbReference type="GO" id="GO:0071949">
    <property type="term" value="F:FAD binding"/>
    <property type="evidence" value="ECO:0007669"/>
    <property type="project" value="InterPro"/>
</dbReference>
<dbReference type="GO" id="GO:0008762">
    <property type="term" value="F:UDP-N-acetylmuramate dehydrogenase activity"/>
    <property type="evidence" value="ECO:0007669"/>
    <property type="project" value="UniProtKB-UniRule"/>
</dbReference>
<dbReference type="GO" id="GO:0051301">
    <property type="term" value="P:cell division"/>
    <property type="evidence" value="ECO:0007669"/>
    <property type="project" value="UniProtKB-KW"/>
</dbReference>
<dbReference type="GO" id="GO:0071555">
    <property type="term" value="P:cell wall organization"/>
    <property type="evidence" value="ECO:0007669"/>
    <property type="project" value="UniProtKB-KW"/>
</dbReference>
<dbReference type="GO" id="GO:0009252">
    <property type="term" value="P:peptidoglycan biosynthetic process"/>
    <property type="evidence" value="ECO:0007669"/>
    <property type="project" value="UniProtKB-UniRule"/>
</dbReference>
<dbReference type="GO" id="GO:0008360">
    <property type="term" value="P:regulation of cell shape"/>
    <property type="evidence" value="ECO:0007669"/>
    <property type="project" value="UniProtKB-KW"/>
</dbReference>
<dbReference type="Gene3D" id="3.30.465.10">
    <property type="match status" value="1"/>
</dbReference>
<dbReference type="Gene3D" id="3.90.78.10">
    <property type="entry name" value="UDP-N-acetylenolpyruvoylglucosamine reductase, C-terminal domain"/>
    <property type="match status" value="1"/>
</dbReference>
<dbReference type="Gene3D" id="3.30.43.10">
    <property type="entry name" value="Uridine Diphospho-n-acetylenolpyruvylglucosamine Reductase, domain 2"/>
    <property type="match status" value="1"/>
</dbReference>
<dbReference type="HAMAP" id="MF_00037">
    <property type="entry name" value="MurB"/>
    <property type="match status" value="1"/>
</dbReference>
<dbReference type="InterPro" id="IPR016166">
    <property type="entry name" value="FAD-bd_PCMH"/>
</dbReference>
<dbReference type="InterPro" id="IPR036318">
    <property type="entry name" value="FAD-bd_PCMH-like_sf"/>
</dbReference>
<dbReference type="InterPro" id="IPR016167">
    <property type="entry name" value="FAD-bd_PCMH_sub1"/>
</dbReference>
<dbReference type="InterPro" id="IPR016169">
    <property type="entry name" value="FAD-bd_PCMH_sub2"/>
</dbReference>
<dbReference type="InterPro" id="IPR003170">
    <property type="entry name" value="MurB"/>
</dbReference>
<dbReference type="InterPro" id="IPR011601">
    <property type="entry name" value="MurB_C"/>
</dbReference>
<dbReference type="InterPro" id="IPR036635">
    <property type="entry name" value="MurB_C_sf"/>
</dbReference>
<dbReference type="InterPro" id="IPR006094">
    <property type="entry name" value="Oxid_FAD_bind_N"/>
</dbReference>
<dbReference type="NCBIfam" id="TIGR00179">
    <property type="entry name" value="murB"/>
    <property type="match status" value="1"/>
</dbReference>
<dbReference type="NCBIfam" id="NF010480">
    <property type="entry name" value="PRK13905.1"/>
    <property type="match status" value="1"/>
</dbReference>
<dbReference type="PANTHER" id="PTHR21071">
    <property type="entry name" value="UDP-N-ACETYLENOLPYRUVOYLGLUCOSAMINE REDUCTASE"/>
    <property type="match status" value="1"/>
</dbReference>
<dbReference type="PANTHER" id="PTHR21071:SF4">
    <property type="entry name" value="UDP-N-ACETYLENOLPYRUVOYLGLUCOSAMINE REDUCTASE"/>
    <property type="match status" value="1"/>
</dbReference>
<dbReference type="Pfam" id="PF01565">
    <property type="entry name" value="FAD_binding_4"/>
    <property type="match status" value="1"/>
</dbReference>
<dbReference type="Pfam" id="PF02873">
    <property type="entry name" value="MurB_C"/>
    <property type="match status" value="1"/>
</dbReference>
<dbReference type="SUPFAM" id="SSF56176">
    <property type="entry name" value="FAD-binding/transporter-associated domain-like"/>
    <property type="match status" value="1"/>
</dbReference>
<dbReference type="SUPFAM" id="SSF56194">
    <property type="entry name" value="Uridine diphospho-N-Acetylenolpyruvylglucosamine reductase, MurB, C-terminal domain"/>
    <property type="match status" value="1"/>
</dbReference>
<dbReference type="PROSITE" id="PS51387">
    <property type="entry name" value="FAD_PCMH"/>
    <property type="match status" value="1"/>
</dbReference>
<comment type="function">
    <text evidence="1">Cell wall formation.</text>
</comment>
<comment type="catalytic activity">
    <reaction evidence="1">
        <text>UDP-N-acetyl-alpha-D-muramate + NADP(+) = UDP-N-acetyl-3-O-(1-carboxyvinyl)-alpha-D-glucosamine + NADPH + H(+)</text>
        <dbReference type="Rhea" id="RHEA:12248"/>
        <dbReference type="ChEBI" id="CHEBI:15378"/>
        <dbReference type="ChEBI" id="CHEBI:57783"/>
        <dbReference type="ChEBI" id="CHEBI:58349"/>
        <dbReference type="ChEBI" id="CHEBI:68483"/>
        <dbReference type="ChEBI" id="CHEBI:70757"/>
        <dbReference type="EC" id="1.3.1.98"/>
    </reaction>
</comment>
<comment type="cofactor">
    <cofactor evidence="1">
        <name>FAD</name>
        <dbReference type="ChEBI" id="CHEBI:57692"/>
    </cofactor>
</comment>
<comment type="pathway">
    <text evidence="1">Cell wall biogenesis; peptidoglycan biosynthesis.</text>
</comment>
<comment type="subcellular location">
    <subcellularLocation>
        <location evidence="1">Cytoplasm</location>
    </subcellularLocation>
</comment>
<comment type="similarity">
    <text evidence="1">Belongs to the MurB family.</text>
</comment>
<name>MURB_STRPQ</name>
<sequence>MITELHGIDIRENEPLKHYTYTKVGGPADFLAFPRNHYELSRIVVYANKENMPWLVLGNASNLIVRDGGIRGFVIMFDKLNAVHLNGYTLEAEAGANLIETTKIAKFHSLTGFEFACGIPGSIGGAVFMNAGAYGGEISHIFLSAKVLTSSGEIKTISARDMAFGYRHSAIQETGDIVISAKFALKPGNYDTISQEMNRLNHLRQLKQPLEFPSCGSVFKRPPGHFAGQLIMEANLKGHRIGGVEVSEKHAGFMINVADGTAKDYEDLIAYVIETVENHSGVRLEPEVRIIGENL</sequence>
<feature type="chain" id="PRO_0000411412" description="UDP-N-acetylenolpyruvoylglucosamine reductase">
    <location>
        <begin position="1"/>
        <end position="295"/>
    </location>
</feature>
<feature type="domain" description="FAD-binding PCMH-type" evidence="1">
    <location>
        <begin position="23"/>
        <end position="188"/>
    </location>
</feature>
<feature type="active site" evidence="1">
    <location>
        <position position="167"/>
    </location>
</feature>
<feature type="active site" description="Proton donor" evidence="1">
    <location>
        <position position="217"/>
    </location>
</feature>
<feature type="active site" evidence="1">
    <location>
        <position position="287"/>
    </location>
</feature>
<evidence type="ECO:0000255" key="1">
    <source>
        <dbReference type="HAMAP-Rule" id="MF_00037"/>
    </source>
</evidence>
<keyword id="KW-0131">Cell cycle</keyword>
<keyword id="KW-0132">Cell division</keyword>
<keyword id="KW-0133">Cell shape</keyword>
<keyword id="KW-0961">Cell wall biogenesis/degradation</keyword>
<keyword id="KW-0963">Cytoplasm</keyword>
<keyword id="KW-0274">FAD</keyword>
<keyword id="KW-0285">Flavoprotein</keyword>
<keyword id="KW-0521">NADP</keyword>
<keyword id="KW-0560">Oxidoreductase</keyword>
<keyword id="KW-0573">Peptidoglycan synthesis</keyword>
<reference key="1">
    <citation type="journal article" date="2003" name="Genome Res.">
        <title>Genome sequence of an M3 strain of Streptococcus pyogenes reveals a large-scale genomic rearrangement in invasive strains and new insights into phage evolution.</title>
        <authorList>
            <person name="Nakagawa I."/>
            <person name="Kurokawa K."/>
            <person name="Yamashita A."/>
            <person name="Nakata M."/>
            <person name="Tomiyasu Y."/>
            <person name="Okahashi N."/>
            <person name="Kawabata S."/>
            <person name="Yamazaki K."/>
            <person name="Shiba T."/>
            <person name="Yasunaga T."/>
            <person name="Hayashi H."/>
            <person name="Hattori M."/>
            <person name="Hamada S."/>
        </authorList>
    </citation>
    <scope>NUCLEOTIDE SEQUENCE [LARGE SCALE GENOMIC DNA]</scope>
    <source>
        <strain>SSI-1</strain>
    </source>
</reference>
<proteinExistence type="inferred from homology"/>